<protein>
    <recommendedName>
        <fullName>Phosphate propanoyltransferase</fullName>
        <ecNumber>2.3.1.222</ecNumber>
    </recommendedName>
    <alternativeName>
        <fullName>Phosphate acyltransferase PduL</fullName>
    </alternativeName>
    <alternativeName>
        <fullName>Phosphotransacylase PduL</fullName>
        <shortName>PTAC</shortName>
    </alternativeName>
    <alternativeName>
        <fullName>Propanediol utilization protein PduL</fullName>
    </alternativeName>
</protein>
<keyword id="KW-0012">Acyltransferase</keyword>
<keyword id="KW-1283">Bacterial microcompartment</keyword>
<keyword id="KW-0479">Metal-binding</keyword>
<keyword id="KW-0808">Transferase</keyword>
<keyword id="KW-0862">Zinc</keyword>
<comment type="function">
    <text evidence="2">Involved in 1,2-propanediol (1,2-PD) utilization within the bacterial microcompartment (BMC) dedicated to 1,2-PD degradation by catalyzing the conversion of propanoyl-CoA to propanoyl-phosphate.</text>
</comment>
<comment type="catalytic activity">
    <reaction evidence="2">
        <text>propanoyl-CoA + phosphate = propanoyl phosphate + CoA</text>
        <dbReference type="Rhea" id="RHEA:28046"/>
        <dbReference type="ChEBI" id="CHEBI:43474"/>
        <dbReference type="ChEBI" id="CHEBI:57287"/>
        <dbReference type="ChEBI" id="CHEBI:57392"/>
        <dbReference type="ChEBI" id="CHEBI:58933"/>
        <dbReference type="EC" id="2.3.1.222"/>
    </reaction>
</comment>
<comment type="cofactor">
    <cofactor evidence="1">
        <name>Zn(2+)</name>
        <dbReference type="ChEBI" id="CHEBI:29105"/>
    </cofactor>
    <text evidence="1">There are 2 Zn(2+) ions per monomer; Zn(2+) and CoA bind inbetween the 2 domains in each monomer.</text>
</comment>
<comment type="pathway">
    <text>Polyol metabolism; 1,2-propanediol degradation.</text>
</comment>
<comment type="subcellular location">
    <subcellularLocation>
        <location evidence="2">Bacterial microcompartment</location>
    </subcellularLocation>
</comment>
<comment type="domain">
    <text evidence="1">Formed by 2 beta-barrels, each is capped on both ends by short alpha-helices.</text>
</comment>
<comment type="similarity">
    <text evidence="3">Belongs to the PduL family.</text>
</comment>
<organism>
    <name type="scientific">Escherichia fergusonii (strain ATCC 35469 / DSM 13698 / CCUG 18766 / IAM 14443 / JCM 21226 / LMG 7866 / NBRC 102419 / NCTC 12128 / CDC 0568-73)</name>
    <dbReference type="NCBI Taxonomy" id="585054"/>
    <lineage>
        <taxon>Bacteria</taxon>
        <taxon>Pseudomonadati</taxon>
        <taxon>Pseudomonadota</taxon>
        <taxon>Gammaproteobacteria</taxon>
        <taxon>Enterobacterales</taxon>
        <taxon>Enterobacteriaceae</taxon>
        <taxon>Escherichia</taxon>
    </lineage>
</organism>
<evidence type="ECO:0000250" key="1">
    <source>
        <dbReference type="UniProtKB" id="Q21A54"/>
    </source>
</evidence>
<evidence type="ECO:0000250" key="2">
    <source>
        <dbReference type="UniProtKB" id="Q9XDN5"/>
    </source>
</evidence>
<evidence type="ECO:0000305" key="3"/>
<proteinExistence type="inferred from homology"/>
<gene>
    <name type="primary">pduL</name>
    <name type="ordered locus">EFER_2017</name>
</gene>
<reference key="1">
    <citation type="journal article" date="2009" name="PLoS Genet.">
        <title>Organised genome dynamics in the Escherichia coli species results in highly diverse adaptive paths.</title>
        <authorList>
            <person name="Touchon M."/>
            <person name="Hoede C."/>
            <person name="Tenaillon O."/>
            <person name="Barbe V."/>
            <person name="Baeriswyl S."/>
            <person name="Bidet P."/>
            <person name="Bingen E."/>
            <person name="Bonacorsi S."/>
            <person name="Bouchier C."/>
            <person name="Bouvet O."/>
            <person name="Calteau A."/>
            <person name="Chiapello H."/>
            <person name="Clermont O."/>
            <person name="Cruveiller S."/>
            <person name="Danchin A."/>
            <person name="Diard M."/>
            <person name="Dossat C."/>
            <person name="Karoui M.E."/>
            <person name="Frapy E."/>
            <person name="Garry L."/>
            <person name="Ghigo J.M."/>
            <person name="Gilles A.M."/>
            <person name="Johnson J."/>
            <person name="Le Bouguenec C."/>
            <person name="Lescat M."/>
            <person name="Mangenot S."/>
            <person name="Martinez-Jehanne V."/>
            <person name="Matic I."/>
            <person name="Nassif X."/>
            <person name="Oztas S."/>
            <person name="Petit M.A."/>
            <person name="Pichon C."/>
            <person name="Rouy Z."/>
            <person name="Ruf C.S."/>
            <person name="Schneider D."/>
            <person name="Tourret J."/>
            <person name="Vacherie B."/>
            <person name="Vallenet D."/>
            <person name="Medigue C."/>
            <person name="Rocha E.P.C."/>
            <person name="Denamur E."/>
        </authorList>
    </citation>
    <scope>NUCLEOTIDE SEQUENCE [LARGE SCALE GENOMIC DNA]</scope>
    <source>
        <strain>ATCC 35469 / DSM 13698 / BCRC 15582 / CCUG 18766 / IAM 14443 / JCM 21226 / LMG 7866 / NBRC 102419 / NCTC 12128 / CDC 0568-73</strain>
    </source>
</reference>
<name>PDUL_ESCF3</name>
<accession>B7LTW5</accession>
<feature type="chain" id="PRO_0000407713" description="Phosphate propanoyltransferase">
    <location>
        <begin position="1"/>
        <end position="210"/>
    </location>
</feature>
<feature type="binding site" evidence="1">
    <location>
        <begin position="26"/>
        <end position="28"/>
    </location>
    <ligand>
        <name>CoA</name>
        <dbReference type="ChEBI" id="CHEBI:57287"/>
    </ligand>
</feature>
<feature type="binding site" evidence="1">
    <location>
        <position position="30"/>
    </location>
    <ligand>
        <name>Zn(2+)</name>
        <dbReference type="ChEBI" id="CHEBI:29105"/>
        <label>1</label>
    </ligand>
</feature>
<feature type="binding site" evidence="1">
    <location>
        <position position="32"/>
    </location>
    <ligand>
        <name>Zn(2+)</name>
        <dbReference type="ChEBI" id="CHEBI:29105"/>
        <label>1</label>
    </ligand>
</feature>
<feature type="binding site" evidence="1">
    <location>
        <position position="71"/>
    </location>
    <ligand>
        <name>CoA</name>
        <dbReference type="ChEBI" id="CHEBI:57287"/>
    </ligand>
</feature>
<feature type="binding site" evidence="1">
    <location>
        <position position="78"/>
    </location>
    <ligand>
        <name>CoA</name>
        <dbReference type="ChEBI" id="CHEBI:57287"/>
    </ligand>
</feature>
<feature type="binding site" evidence="1">
    <location>
        <position position="84"/>
    </location>
    <ligand>
        <name>phosphate</name>
        <dbReference type="ChEBI" id="CHEBI:43474"/>
    </ligand>
</feature>
<feature type="binding site" evidence="1">
    <location>
        <position position="90"/>
    </location>
    <ligand>
        <name>Zn(2+)</name>
        <dbReference type="ChEBI" id="CHEBI:29105"/>
        <label>1</label>
    </ligand>
</feature>
<feature type="binding site" evidence="1">
    <location>
        <position position="138"/>
    </location>
    <ligand>
        <name>Zn(2+)</name>
        <dbReference type="ChEBI" id="CHEBI:29105"/>
        <label>2</label>
    </ligand>
</feature>
<feature type="binding site" evidence="1">
    <location>
        <position position="140"/>
    </location>
    <ligand>
        <name>Zn(2+)</name>
        <dbReference type="ChEBI" id="CHEBI:29105"/>
        <label>2</label>
    </ligand>
</feature>
<feature type="binding site" evidence="1">
    <location>
        <position position="186"/>
    </location>
    <ligand>
        <name>Zn(2+)</name>
        <dbReference type="ChEBI" id="CHEBI:29105"/>
        <label>2</label>
    </ligand>
</feature>
<feature type="binding site" evidence="1">
    <location>
        <position position="193"/>
    </location>
    <ligand>
        <name>CoA</name>
        <dbReference type="ChEBI" id="CHEBI:57287"/>
    </ligand>
</feature>
<dbReference type="EC" id="2.3.1.222"/>
<dbReference type="EMBL" id="CU928158">
    <property type="protein sequence ID" value="CAQ89522.1"/>
    <property type="molecule type" value="Genomic_DNA"/>
</dbReference>
<dbReference type="RefSeq" id="WP_000360798.1">
    <property type="nucleotide sequence ID" value="NC_011740.1"/>
</dbReference>
<dbReference type="SMR" id="B7LTW5"/>
<dbReference type="KEGG" id="efe:EFER_2017"/>
<dbReference type="HOGENOM" id="CLU_080676_1_0_6"/>
<dbReference type="OrthoDB" id="9784365at2"/>
<dbReference type="UniPathway" id="UPA00621"/>
<dbReference type="Proteomes" id="UP000000745">
    <property type="component" value="Chromosome"/>
</dbReference>
<dbReference type="GO" id="GO:0031469">
    <property type="term" value="C:bacterial microcompartment"/>
    <property type="evidence" value="ECO:0007669"/>
    <property type="project" value="UniProtKB-SubCell"/>
</dbReference>
<dbReference type="GO" id="GO:0016747">
    <property type="term" value="F:acyltransferase activity, transferring groups other than amino-acyl groups"/>
    <property type="evidence" value="ECO:0007669"/>
    <property type="project" value="InterPro"/>
</dbReference>
<dbReference type="GO" id="GO:0046872">
    <property type="term" value="F:metal ion binding"/>
    <property type="evidence" value="ECO:0007669"/>
    <property type="project" value="UniProtKB-KW"/>
</dbReference>
<dbReference type="GO" id="GO:0051144">
    <property type="term" value="P:propanediol catabolic process"/>
    <property type="evidence" value="ECO:0007669"/>
    <property type="project" value="UniProtKB-UniPathway"/>
</dbReference>
<dbReference type="InterPro" id="IPR008300">
    <property type="entry name" value="PTAC"/>
</dbReference>
<dbReference type="NCBIfam" id="NF011652">
    <property type="entry name" value="PRK15070.1"/>
    <property type="match status" value="1"/>
</dbReference>
<dbReference type="PANTHER" id="PTHR39453">
    <property type="entry name" value="PHOSPHATE PROPANOYLTRANSFERASE"/>
    <property type="match status" value="1"/>
</dbReference>
<dbReference type="PANTHER" id="PTHR39453:SF1">
    <property type="entry name" value="PHOSPHATE PROPANOYLTRANSFERASE"/>
    <property type="match status" value="1"/>
</dbReference>
<dbReference type="Pfam" id="PF06130">
    <property type="entry name" value="PTAC"/>
    <property type="match status" value="1"/>
</dbReference>
<dbReference type="PIRSF" id="PIRSF010130">
    <property type="entry name" value="PduL"/>
    <property type="match status" value="1"/>
</dbReference>
<sequence length="210" mass="22850">MDKQLLETAVGKVLEEMRERPIPLGISNRHIHLSAQDFAHLFPGQSISVKKALMQPDQYAAEQTLTLVGPKGKLEKVRLLGPLRSASQVEVSRTDARTLGITAPLRMSGDLQGTPGVRLVSPFAELEITSGVIVAQRHIHMSPLDALILNVSHGDKVSVAIKGDERRLIFDNVAVRVSPDMRLEMHIDTDEANAAGADNPQVCAMLVNKS</sequence>